<sequence>MKTFSPTPKDINRQWFVVDAQDQVLGRLASQIAHRLRGKHKPEFAPHMDNGDFIVVVNCEKIKVTGNKLADKKYYRHSGWVGGLKTTILGDVLADKPSRALMAAVKGMLPKNRLGRAMLKKLKIYAGPEHPHTAQNPQPLTLPH</sequence>
<proteinExistence type="inferred from homology"/>
<organism>
    <name type="scientific">Desulfovibrio desulfuricans (strain ATCC 27774 / DSM 6949 / MB)</name>
    <dbReference type="NCBI Taxonomy" id="525146"/>
    <lineage>
        <taxon>Bacteria</taxon>
        <taxon>Pseudomonadati</taxon>
        <taxon>Thermodesulfobacteriota</taxon>
        <taxon>Desulfovibrionia</taxon>
        <taxon>Desulfovibrionales</taxon>
        <taxon>Desulfovibrionaceae</taxon>
        <taxon>Desulfovibrio</taxon>
    </lineage>
</organism>
<protein>
    <recommendedName>
        <fullName evidence="1">Large ribosomal subunit protein uL13</fullName>
    </recommendedName>
    <alternativeName>
        <fullName evidence="2">50S ribosomal protein L13</fullName>
    </alternativeName>
</protein>
<reference key="1">
    <citation type="submission" date="2009-01" db="EMBL/GenBank/DDBJ databases">
        <title>Complete sequence of Desulfovibrio desulfuricans subsp. desulfuricans str. ATCC 27774.</title>
        <authorList>
            <consortium name="US DOE Joint Genome Institute"/>
            <person name="Lucas S."/>
            <person name="Copeland A."/>
            <person name="Lapidus A."/>
            <person name="Glavina del Rio T."/>
            <person name="Tice H."/>
            <person name="Bruce D."/>
            <person name="Goodwin L."/>
            <person name="Pitluck S."/>
            <person name="Sims D."/>
            <person name="Lu M."/>
            <person name="Kiss H."/>
            <person name="Meineke L."/>
            <person name="Brettin T."/>
            <person name="Detter J.C."/>
            <person name="Han C."/>
            <person name="Larimer F."/>
            <person name="Land M."/>
            <person name="Hauser L."/>
            <person name="Kyrpides N."/>
            <person name="Ovchinnikova G."/>
            <person name="Hazen T.C."/>
        </authorList>
    </citation>
    <scope>NUCLEOTIDE SEQUENCE [LARGE SCALE GENOMIC DNA]</scope>
    <source>
        <strain>ATCC 27774 / DSM 6949 / MB</strain>
    </source>
</reference>
<dbReference type="EMBL" id="CP001358">
    <property type="protein sequence ID" value="ACL48969.1"/>
    <property type="molecule type" value="Genomic_DNA"/>
</dbReference>
<dbReference type="SMR" id="B8IZP2"/>
<dbReference type="STRING" id="525146.Ddes_1062"/>
<dbReference type="KEGG" id="dds:Ddes_1062"/>
<dbReference type="eggNOG" id="COG0102">
    <property type="taxonomic scope" value="Bacteria"/>
</dbReference>
<dbReference type="HOGENOM" id="CLU_082184_2_2_7"/>
<dbReference type="GO" id="GO:0022625">
    <property type="term" value="C:cytosolic large ribosomal subunit"/>
    <property type="evidence" value="ECO:0007669"/>
    <property type="project" value="TreeGrafter"/>
</dbReference>
<dbReference type="GO" id="GO:0003729">
    <property type="term" value="F:mRNA binding"/>
    <property type="evidence" value="ECO:0007669"/>
    <property type="project" value="TreeGrafter"/>
</dbReference>
<dbReference type="GO" id="GO:0003735">
    <property type="term" value="F:structural constituent of ribosome"/>
    <property type="evidence" value="ECO:0007669"/>
    <property type="project" value="InterPro"/>
</dbReference>
<dbReference type="GO" id="GO:0017148">
    <property type="term" value="P:negative regulation of translation"/>
    <property type="evidence" value="ECO:0007669"/>
    <property type="project" value="TreeGrafter"/>
</dbReference>
<dbReference type="GO" id="GO:0006412">
    <property type="term" value="P:translation"/>
    <property type="evidence" value="ECO:0007669"/>
    <property type="project" value="UniProtKB-UniRule"/>
</dbReference>
<dbReference type="CDD" id="cd00392">
    <property type="entry name" value="Ribosomal_L13"/>
    <property type="match status" value="1"/>
</dbReference>
<dbReference type="FunFam" id="3.90.1180.10:FF:000001">
    <property type="entry name" value="50S ribosomal protein L13"/>
    <property type="match status" value="1"/>
</dbReference>
<dbReference type="Gene3D" id="3.90.1180.10">
    <property type="entry name" value="Ribosomal protein L13"/>
    <property type="match status" value="1"/>
</dbReference>
<dbReference type="HAMAP" id="MF_01366">
    <property type="entry name" value="Ribosomal_uL13"/>
    <property type="match status" value="1"/>
</dbReference>
<dbReference type="InterPro" id="IPR005822">
    <property type="entry name" value="Ribosomal_uL13"/>
</dbReference>
<dbReference type="InterPro" id="IPR005823">
    <property type="entry name" value="Ribosomal_uL13_bac-type"/>
</dbReference>
<dbReference type="InterPro" id="IPR023563">
    <property type="entry name" value="Ribosomal_uL13_CS"/>
</dbReference>
<dbReference type="InterPro" id="IPR036899">
    <property type="entry name" value="Ribosomal_uL13_sf"/>
</dbReference>
<dbReference type="NCBIfam" id="TIGR01066">
    <property type="entry name" value="rplM_bact"/>
    <property type="match status" value="1"/>
</dbReference>
<dbReference type="PANTHER" id="PTHR11545:SF2">
    <property type="entry name" value="LARGE RIBOSOMAL SUBUNIT PROTEIN UL13M"/>
    <property type="match status" value="1"/>
</dbReference>
<dbReference type="PANTHER" id="PTHR11545">
    <property type="entry name" value="RIBOSOMAL PROTEIN L13"/>
    <property type="match status" value="1"/>
</dbReference>
<dbReference type="Pfam" id="PF00572">
    <property type="entry name" value="Ribosomal_L13"/>
    <property type="match status" value="1"/>
</dbReference>
<dbReference type="PIRSF" id="PIRSF002181">
    <property type="entry name" value="Ribosomal_L13"/>
    <property type="match status" value="1"/>
</dbReference>
<dbReference type="SUPFAM" id="SSF52161">
    <property type="entry name" value="Ribosomal protein L13"/>
    <property type="match status" value="1"/>
</dbReference>
<dbReference type="PROSITE" id="PS00783">
    <property type="entry name" value="RIBOSOMAL_L13"/>
    <property type="match status" value="1"/>
</dbReference>
<feature type="chain" id="PRO_1000166864" description="Large ribosomal subunit protein uL13">
    <location>
        <begin position="1"/>
        <end position="144"/>
    </location>
</feature>
<keyword id="KW-0687">Ribonucleoprotein</keyword>
<keyword id="KW-0689">Ribosomal protein</keyword>
<evidence type="ECO:0000255" key="1">
    <source>
        <dbReference type="HAMAP-Rule" id="MF_01366"/>
    </source>
</evidence>
<evidence type="ECO:0000305" key="2"/>
<comment type="function">
    <text evidence="1">This protein is one of the early assembly proteins of the 50S ribosomal subunit, although it is not seen to bind rRNA by itself. It is important during the early stages of 50S assembly.</text>
</comment>
<comment type="subunit">
    <text evidence="1">Part of the 50S ribosomal subunit.</text>
</comment>
<comment type="similarity">
    <text evidence="1">Belongs to the universal ribosomal protein uL13 family.</text>
</comment>
<accession>B8IZP2</accession>
<gene>
    <name evidence="1" type="primary">rplM</name>
    <name type="ordered locus">Ddes_1062</name>
</gene>
<name>RL13_DESDA</name>